<dbReference type="EC" id="3.5.4.16" evidence="1"/>
<dbReference type="EMBL" id="CP000948">
    <property type="protein sequence ID" value="ACB03317.1"/>
    <property type="molecule type" value="Genomic_DNA"/>
</dbReference>
<dbReference type="RefSeq" id="WP_001139613.1">
    <property type="nucleotide sequence ID" value="NC_010473.1"/>
</dbReference>
<dbReference type="SMR" id="B1X7P1"/>
<dbReference type="GeneID" id="93775029"/>
<dbReference type="KEGG" id="ecd:ECDH10B_2310"/>
<dbReference type="HOGENOM" id="CLU_049768_3_2_6"/>
<dbReference type="UniPathway" id="UPA00848">
    <property type="reaction ID" value="UER00151"/>
</dbReference>
<dbReference type="GO" id="GO:0005737">
    <property type="term" value="C:cytoplasm"/>
    <property type="evidence" value="ECO:0007669"/>
    <property type="project" value="TreeGrafter"/>
</dbReference>
<dbReference type="GO" id="GO:0005525">
    <property type="term" value="F:GTP binding"/>
    <property type="evidence" value="ECO:0007669"/>
    <property type="project" value="UniProtKB-KW"/>
</dbReference>
<dbReference type="GO" id="GO:0003934">
    <property type="term" value="F:GTP cyclohydrolase I activity"/>
    <property type="evidence" value="ECO:0007669"/>
    <property type="project" value="UniProtKB-UniRule"/>
</dbReference>
<dbReference type="GO" id="GO:0008270">
    <property type="term" value="F:zinc ion binding"/>
    <property type="evidence" value="ECO:0007669"/>
    <property type="project" value="UniProtKB-UniRule"/>
</dbReference>
<dbReference type="GO" id="GO:0006730">
    <property type="term" value="P:one-carbon metabolic process"/>
    <property type="evidence" value="ECO:0007669"/>
    <property type="project" value="UniProtKB-UniRule"/>
</dbReference>
<dbReference type="GO" id="GO:0006729">
    <property type="term" value="P:tetrahydrobiopterin biosynthetic process"/>
    <property type="evidence" value="ECO:0007669"/>
    <property type="project" value="TreeGrafter"/>
</dbReference>
<dbReference type="GO" id="GO:0046654">
    <property type="term" value="P:tetrahydrofolate biosynthetic process"/>
    <property type="evidence" value="ECO:0007669"/>
    <property type="project" value="UniProtKB-UniRule"/>
</dbReference>
<dbReference type="CDD" id="cd00642">
    <property type="entry name" value="GTP_cyclohydro1"/>
    <property type="match status" value="1"/>
</dbReference>
<dbReference type="FunFam" id="1.10.286.10:FF:000002">
    <property type="entry name" value="GTP cyclohydrolase 1"/>
    <property type="match status" value="1"/>
</dbReference>
<dbReference type="FunFam" id="3.30.1130.10:FF:000001">
    <property type="entry name" value="GTP cyclohydrolase 1"/>
    <property type="match status" value="1"/>
</dbReference>
<dbReference type="Gene3D" id="1.10.286.10">
    <property type="match status" value="1"/>
</dbReference>
<dbReference type="Gene3D" id="3.30.1130.10">
    <property type="match status" value="1"/>
</dbReference>
<dbReference type="HAMAP" id="MF_00223">
    <property type="entry name" value="FolE"/>
    <property type="match status" value="1"/>
</dbReference>
<dbReference type="InterPro" id="IPR043133">
    <property type="entry name" value="GTP-CH-I_C/QueF"/>
</dbReference>
<dbReference type="InterPro" id="IPR043134">
    <property type="entry name" value="GTP-CH-I_N"/>
</dbReference>
<dbReference type="InterPro" id="IPR001474">
    <property type="entry name" value="GTP_CycHdrlase_I"/>
</dbReference>
<dbReference type="InterPro" id="IPR018234">
    <property type="entry name" value="GTP_CycHdrlase_I_CS"/>
</dbReference>
<dbReference type="InterPro" id="IPR020602">
    <property type="entry name" value="GTP_CycHdrlase_I_dom"/>
</dbReference>
<dbReference type="NCBIfam" id="TIGR00063">
    <property type="entry name" value="folE"/>
    <property type="match status" value="1"/>
</dbReference>
<dbReference type="NCBIfam" id="NF006824">
    <property type="entry name" value="PRK09347.1-1"/>
    <property type="match status" value="1"/>
</dbReference>
<dbReference type="NCBIfam" id="NF006826">
    <property type="entry name" value="PRK09347.1-3"/>
    <property type="match status" value="1"/>
</dbReference>
<dbReference type="PANTHER" id="PTHR11109:SF7">
    <property type="entry name" value="GTP CYCLOHYDROLASE 1"/>
    <property type="match status" value="1"/>
</dbReference>
<dbReference type="PANTHER" id="PTHR11109">
    <property type="entry name" value="GTP CYCLOHYDROLASE I"/>
    <property type="match status" value="1"/>
</dbReference>
<dbReference type="Pfam" id="PF01227">
    <property type="entry name" value="GTP_cyclohydroI"/>
    <property type="match status" value="1"/>
</dbReference>
<dbReference type="SUPFAM" id="SSF55620">
    <property type="entry name" value="Tetrahydrobiopterin biosynthesis enzymes-like"/>
    <property type="match status" value="1"/>
</dbReference>
<dbReference type="PROSITE" id="PS00859">
    <property type="entry name" value="GTP_CYCLOHYDROL_1_1"/>
    <property type="match status" value="1"/>
</dbReference>
<dbReference type="PROSITE" id="PS00860">
    <property type="entry name" value="GTP_CYCLOHYDROL_1_2"/>
    <property type="match status" value="1"/>
</dbReference>
<gene>
    <name evidence="1" type="primary">folE</name>
    <name type="ordered locus">ECDH10B_2310</name>
</gene>
<comment type="catalytic activity">
    <reaction evidence="1">
        <text>GTP + H2O = 7,8-dihydroneopterin 3'-triphosphate + formate + H(+)</text>
        <dbReference type="Rhea" id="RHEA:17473"/>
        <dbReference type="ChEBI" id="CHEBI:15377"/>
        <dbReference type="ChEBI" id="CHEBI:15378"/>
        <dbReference type="ChEBI" id="CHEBI:15740"/>
        <dbReference type="ChEBI" id="CHEBI:37565"/>
        <dbReference type="ChEBI" id="CHEBI:58462"/>
        <dbReference type="EC" id="3.5.4.16"/>
    </reaction>
</comment>
<comment type="pathway">
    <text evidence="1">Cofactor biosynthesis; 7,8-dihydroneopterin triphosphate biosynthesis; 7,8-dihydroneopterin triphosphate from GTP: step 1/1.</text>
</comment>
<comment type="subunit">
    <text evidence="1">Homomer.</text>
</comment>
<comment type="similarity">
    <text evidence="1">Belongs to the GTP cyclohydrolase I family.</text>
</comment>
<name>GCH1_ECODH</name>
<reference key="1">
    <citation type="journal article" date="2008" name="J. Bacteriol.">
        <title>The complete genome sequence of Escherichia coli DH10B: insights into the biology of a laboratory workhorse.</title>
        <authorList>
            <person name="Durfee T."/>
            <person name="Nelson R."/>
            <person name="Baldwin S."/>
            <person name="Plunkett G. III"/>
            <person name="Burland V."/>
            <person name="Mau B."/>
            <person name="Petrosino J.F."/>
            <person name="Qin X."/>
            <person name="Muzny D.M."/>
            <person name="Ayele M."/>
            <person name="Gibbs R.A."/>
            <person name="Csorgo B."/>
            <person name="Posfai G."/>
            <person name="Weinstock G.M."/>
            <person name="Blattner F.R."/>
        </authorList>
    </citation>
    <scope>NUCLEOTIDE SEQUENCE [LARGE SCALE GENOMIC DNA]</scope>
    <source>
        <strain>K12 / DH10B</strain>
    </source>
</reference>
<organism>
    <name type="scientific">Escherichia coli (strain K12 / DH10B)</name>
    <dbReference type="NCBI Taxonomy" id="316385"/>
    <lineage>
        <taxon>Bacteria</taxon>
        <taxon>Pseudomonadati</taxon>
        <taxon>Pseudomonadota</taxon>
        <taxon>Gammaproteobacteria</taxon>
        <taxon>Enterobacterales</taxon>
        <taxon>Enterobacteriaceae</taxon>
        <taxon>Escherichia</taxon>
    </lineage>
</organism>
<accession>B1X7P1</accession>
<evidence type="ECO:0000255" key="1">
    <source>
        <dbReference type="HAMAP-Rule" id="MF_00223"/>
    </source>
</evidence>
<feature type="chain" id="PRO_1000100171" description="GTP cyclohydrolase 1">
    <location>
        <begin position="1"/>
        <end position="222"/>
    </location>
</feature>
<feature type="binding site" evidence="1">
    <location>
        <position position="111"/>
    </location>
    <ligand>
        <name>Zn(2+)</name>
        <dbReference type="ChEBI" id="CHEBI:29105"/>
    </ligand>
</feature>
<feature type="binding site" evidence="1">
    <location>
        <position position="114"/>
    </location>
    <ligand>
        <name>Zn(2+)</name>
        <dbReference type="ChEBI" id="CHEBI:29105"/>
    </ligand>
</feature>
<feature type="binding site" evidence="1">
    <location>
        <position position="182"/>
    </location>
    <ligand>
        <name>Zn(2+)</name>
        <dbReference type="ChEBI" id="CHEBI:29105"/>
    </ligand>
</feature>
<keyword id="KW-0342">GTP-binding</keyword>
<keyword id="KW-0378">Hydrolase</keyword>
<keyword id="KW-0479">Metal-binding</keyword>
<keyword id="KW-0547">Nucleotide-binding</keyword>
<keyword id="KW-0554">One-carbon metabolism</keyword>
<keyword id="KW-0862">Zinc</keyword>
<sequence>MPSLSKEAALVHEALVARGLETPLRPPVHEMDNETRKSLIAGHMTEIMQLLNLDLADDSLMETPHRIAKMYVDEIFSGLDYANFPKITLIENKMKVDEMVTVRDITLTSTCEHHFVTIDGKATVAYIPKDSVIGLSKINRIVQFFAQRPQVQERLTQQILIALQTLLGTNNVAVSIDAVHYCVKARGIRDATSATTTTSLGGLFKSSQNTRHEFLRAVRHHN</sequence>
<proteinExistence type="inferred from homology"/>
<protein>
    <recommendedName>
        <fullName evidence="1">GTP cyclohydrolase 1</fullName>
        <ecNumber evidence="1">3.5.4.16</ecNumber>
    </recommendedName>
    <alternativeName>
        <fullName evidence="1">GTP cyclohydrolase I</fullName>
        <shortName evidence="1">GTP-CH-I</shortName>
    </alternativeName>
</protein>